<comment type="function">
    <text evidence="3">Water channel required to facilitate the transport of water across cell membrane. Inactive in yeast cells.</text>
</comment>
<comment type="subcellular location">
    <subcellularLocation>
        <location evidence="4">Endoplasmic reticulum membrane</location>
        <topology evidence="4">Multi-pass membrane protein</topology>
    </subcellularLocation>
</comment>
<comment type="alternative products">
    <event type="alternative splicing"/>
    <isoform>
        <id>Q9M1K3-1</id>
        <name>1</name>
        <sequence type="displayed"/>
    </isoform>
    <text>A number of isoforms are produced. According to EST sequences.</text>
</comment>
<comment type="tissue specificity">
    <text evidence="2 3">Expressed in dividing cells and elongating regions of the root tips, emerging lateral roots, root steles, cotyledons, main veins of the rosette leaves, vascular tissues of the flower petals, stigma, stamens (anthers and filaments), pollen and the top and bottom (receptacle) of siliques.</text>
</comment>
<comment type="domain">
    <text>Aquaporins contain two tandem repeats each containing three membrane-spanning domains and a pore-forming loop with the signature motif Asn-Pro-Ala/Leu (NPA).</text>
</comment>
<comment type="similarity">
    <text evidence="4">Belongs to the MIP/aquaporin (TC 1.A.8) family. SIP (TC 1.A.8.10) subfamily.</text>
</comment>
<keyword id="KW-0025">Alternative splicing</keyword>
<keyword id="KW-0256">Endoplasmic reticulum</keyword>
<keyword id="KW-0472">Membrane</keyword>
<keyword id="KW-1185">Reference proteome</keyword>
<keyword id="KW-0677">Repeat</keyword>
<keyword id="KW-0812">Transmembrane</keyword>
<keyword id="KW-1133">Transmembrane helix</keyword>
<keyword id="KW-0813">Transport</keyword>
<accession>Q9M1K3</accession>
<name>SIP21_ARATH</name>
<reference key="1">
    <citation type="journal article" date="2000" name="Nature">
        <title>Sequence and analysis of chromosome 3 of the plant Arabidopsis thaliana.</title>
        <authorList>
            <person name="Salanoubat M."/>
            <person name="Lemcke K."/>
            <person name="Rieger M."/>
            <person name="Ansorge W."/>
            <person name="Unseld M."/>
            <person name="Fartmann B."/>
            <person name="Valle G."/>
            <person name="Bloecker H."/>
            <person name="Perez-Alonso M."/>
            <person name="Obermaier B."/>
            <person name="Delseny M."/>
            <person name="Boutry M."/>
            <person name="Grivell L.A."/>
            <person name="Mache R."/>
            <person name="Puigdomenech P."/>
            <person name="De Simone V."/>
            <person name="Choisne N."/>
            <person name="Artiguenave F."/>
            <person name="Robert C."/>
            <person name="Brottier P."/>
            <person name="Wincker P."/>
            <person name="Cattolico L."/>
            <person name="Weissenbach J."/>
            <person name="Saurin W."/>
            <person name="Quetier F."/>
            <person name="Schaefer M."/>
            <person name="Mueller-Auer S."/>
            <person name="Gabel C."/>
            <person name="Fuchs M."/>
            <person name="Benes V."/>
            <person name="Wurmbach E."/>
            <person name="Drzonek H."/>
            <person name="Erfle H."/>
            <person name="Jordan N."/>
            <person name="Bangert S."/>
            <person name="Wiedelmann R."/>
            <person name="Kranz H."/>
            <person name="Voss H."/>
            <person name="Holland R."/>
            <person name="Brandt P."/>
            <person name="Nyakatura G."/>
            <person name="Vezzi A."/>
            <person name="D'Angelo M."/>
            <person name="Pallavicini A."/>
            <person name="Toppo S."/>
            <person name="Simionati B."/>
            <person name="Conrad A."/>
            <person name="Hornischer K."/>
            <person name="Kauer G."/>
            <person name="Loehnert T.-H."/>
            <person name="Nordsiek G."/>
            <person name="Reichelt J."/>
            <person name="Scharfe M."/>
            <person name="Schoen O."/>
            <person name="Bargues M."/>
            <person name="Terol J."/>
            <person name="Climent J."/>
            <person name="Navarro P."/>
            <person name="Collado C."/>
            <person name="Perez-Perez A."/>
            <person name="Ottenwaelder B."/>
            <person name="Duchemin D."/>
            <person name="Cooke R."/>
            <person name="Laudie M."/>
            <person name="Berger-Llauro C."/>
            <person name="Purnelle B."/>
            <person name="Masuy D."/>
            <person name="de Haan M."/>
            <person name="Maarse A.C."/>
            <person name="Alcaraz J.-P."/>
            <person name="Cottet A."/>
            <person name="Casacuberta E."/>
            <person name="Monfort A."/>
            <person name="Argiriou A."/>
            <person name="Flores M."/>
            <person name="Liguori R."/>
            <person name="Vitale D."/>
            <person name="Mannhaupt G."/>
            <person name="Haase D."/>
            <person name="Schoof H."/>
            <person name="Rudd S."/>
            <person name="Zaccaria P."/>
            <person name="Mewes H.-W."/>
            <person name="Mayer K.F.X."/>
            <person name="Kaul S."/>
            <person name="Town C.D."/>
            <person name="Koo H.L."/>
            <person name="Tallon L.J."/>
            <person name="Jenkins J."/>
            <person name="Rooney T."/>
            <person name="Rizzo M."/>
            <person name="Walts A."/>
            <person name="Utterback T."/>
            <person name="Fujii C.Y."/>
            <person name="Shea T.P."/>
            <person name="Creasy T.H."/>
            <person name="Haas B."/>
            <person name="Maiti R."/>
            <person name="Wu D."/>
            <person name="Peterson J."/>
            <person name="Van Aken S."/>
            <person name="Pai G."/>
            <person name="Militscher J."/>
            <person name="Sellers P."/>
            <person name="Gill J.E."/>
            <person name="Feldblyum T.V."/>
            <person name="Preuss D."/>
            <person name="Lin X."/>
            <person name="Nierman W.C."/>
            <person name="Salzberg S.L."/>
            <person name="White O."/>
            <person name="Venter J.C."/>
            <person name="Fraser C.M."/>
            <person name="Kaneko T."/>
            <person name="Nakamura Y."/>
            <person name="Sato S."/>
            <person name="Kato T."/>
            <person name="Asamizu E."/>
            <person name="Sasamoto S."/>
            <person name="Kimura T."/>
            <person name="Idesawa K."/>
            <person name="Kawashima K."/>
            <person name="Kishida Y."/>
            <person name="Kiyokawa C."/>
            <person name="Kohara M."/>
            <person name="Matsumoto M."/>
            <person name="Matsuno A."/>
            <person name="Muraki A."/>
            <person name="Nakayama S."/>
            <person name="Nakazaki N."/>
            <person name="Shinpo S."/>
            <person name="Takeuchi C."/>
            <person name="Wada T."/>
            <person name="Watanabe A."/>
            <person name="Yamada M."/>
            <person name="Yasuda M."/>
            <person name="Tabata S."/>
        </authorList>
    </citation>
    <scope>NUCLEOTIDE SEQUENCE [LARGE SCALE GENOMIC DNA]</scope>
    <source>
        <strain>cv. Columbia</strain>
    </source>
</reference>
<reference key="2">
    <citation type="journal article" date="2017" name="Plant J.">
        <title>Araport11: a complete reannotation of the Arabidopsis thaliana reference genome.</title>
        <authorList>
            <person name="Cheng C.Y."/>
            <person name="Krishnakumar V."/>
            <person name="Chan A.P."/>
            <person name="Thibaud-Nissen F."/>
            <person name="Schobel S."/>
            <person name="Town C.D."/>
        </authorList>
    </citation>
    <scope>GENOME REANNOTATION</scope>
    <source>
        <strain>cv. Columbia</strain>
    </source>
</reference>
<reference key="3">
    <citation type="journal article" date="2003" name="Science">
        <title>Empirical analysis of transcriptional activity in the Arabidopsis genome.</title>
        <authorList>
            <person name="Yamada K."/>
            <person name="Lim J."/>
            <person name="Dale J.M."/>
            <person name="Chen H."/>
            <person name="Shinn P."/>
            <person name="Palm C.J."/>
            <person name="Southwick A.M."/>
            <person name="Wu H.C."/>
            <person name="Kim C.J."/>
            <person name="Nguyen M."/>
            <person name="Pham P.K."/>
            <person name="Cheuk R.F."/>
            <person name="Karlin-Newmann G."/>
            <person name="Liu S.X."/>
            <person name="Lam B."/>
            <person name="Sakano H."/>
            <person name="Wu T."/>
            <person name="Yu G."/>
            <person name="Miranda M."/>
            <person name="Quach H.L."/>
            <person name="Tripp M."/>
            <person name="Chang C.H."/>
            <person name="Lee J.M."/>
            <person name="Toriumi M.J."/>
            <person name="Chan M.M."/>
            <person name="Tang C.C."/>
            <person name="Onodera C.S."/>
            <person name="Deng J.M."/>
            <person name="Akiyama K."/>
            <person name="Ansari Y."/>
            <person name="Arakawa T."/>
            <person name="Banh J."/>
            <person name="Banno F."/>
            <person name="Bowser L."/>
            <person name="Brooks S.Y."/>
            <person name="Carninci P."/>
            <person name="Chao Q."/>
            <person name="Choy N."/>
            <person name="Enju A."/>
            <person name="Goldsmith A.D."/>
            <person name="Gurjal M."/>
            <person name="Hansen N.F."/>
            <person name="Hayashizaki Y."/>
            <person name="Johnson-Hopson C."/>
            <person name="Hsuan V.W."/>
            <person name="Iida K."/>
            <person name="Karnes M."/>
            <person name="Khan S."/>
            <person name="Koesema E."/>
            <person name="Ishida J."/>
            <person name="Jiang P.X."/>
            <person name="Jones T."/>
            <person name="Kawai J."/>
            <person name="Kamiya A."/>
            <person name="Meyers C."/>
            <person name="Nakajima M."/>
            <person name="Narusaka M."/>
            <person name="Seki M."/>
            <person name="Sakurai T."/>
            <person name="Satou M."/>
            <person name="Tamse R."/>
            <person name="Vaysberg M."/>
            <person name="Wallender E.K."/>
            <person name="Wong C."/>
            <person name="Yamamura Y."/>
            <person name="Yuan S."/>
            <person name="Shinozaki K."/>
            <person name="Davis R.W."/>
            <person name="Theologis A."/>
            <person name="Ecker J.R."/>
        </authorList>
    </citation>
    <scope>NUCLEOTIDE SEQUENCE [LARGE SCALE MRNA]</scope>
    <source>
        <strain>cv. Columbia</strain>
    </source>
</reference>
<reference key="4">
    <citation type="submission" date="2002-03" db="EMBL/GenBank/DDBJ databases">
        <title>Full-length cDNA from Arabidopsis thaliana.</title>
        <authorList>
            <person name="Brover V.V."/>
            <person name="Troukhan M.E."/>
            <person name="Alexandrov N.A."/>
            <person name="Lu Y.-P."/>
            <person name="Flavell R.B."/>
            <person name="Feldmann K.A."/>
        </authorList>
    </citation>
    <scope>NUCLEOTIDE SEQUENCE [LARGE SCALE MRNA]</scope>
</reference>
<reference key="5">
    <citation type="journal article" date="2002" name="Genome Biol.">
        <title>From genome to function: the Arabidopsis aquaporins.</title>
        <authorList>
            <person name="Quigley F."/>
            <person name="Rosenberg J.M."/>
            <person name="Shachar-Hill Y."/>
            <person name="Bohnert H.J."/>
        </authorList>
    </citation>
    <scope>NOMENCLATURE</scope>
    <scope>TISSUE SPECIFICITY</scope>
</reference>
<reference key="6">
    <citation type="journal article" date="2005" name="FEBS Lett.">
        <title>Novel type aquaporin SIPs are mainly localized to the ER membrane and show cell-specific expression in Arabidopsis thaliana.</title>
        <authorList>
            <person name="Ishikawa F."/>
            <person name="Suga S."/>
            <person name="Uemura T."/>
            <person name="Sato M.H."/>
            <person name="Maeshima M."/>
        </authorList>
    </citation>
    <scope>FUNCTION</scope>
    <scope>SUBCELLULAR LOCATION</scope>
    <scope>TISSUE SPECIFICITY</scope>
</reference>
<protein>
    <recommendedName>
        <fullName>Probable aquaporin SIP2-1</fullName>
    </recommendedName>
    <alternativeName>
        <fullName>Small basic intrinsic protein 2-1</fullName>
        <shortName>AtSIP2;1</shortName>
    </alternativeName>
</protein>
<feature type="chain" id="PRO_0000064075" description="Probable aquaporin SIP2-1">
    <location>
        <begin position="1"/>
        <end position="237"/>
    </location>
</feature>
<feature type="transmembrane region" description="Helical; Name=1" evidence="1">
    <location>
        <begin position="15"/>
        <end position="35"/>
    </location>
</feature>
<feature type="transmembrane region" description="Helical; Name=2" evidence="1">
    <location>
        <begin position="39"/>
        <end position="59"/>
    </location>
</feature>
<feature type="transmembrane region" description="Helical; Name=3" evidence="1">
    <location>
        <begin position="71"/>
        <end position="91"/>
    </location>
</feature>
<feature type="transmembrane region" description="Helical; Name=4" evidence="1">
    <location>
        <begin position="122"/>
        <end position="142"/>
    </location>
</feature>
<feature type="transmembrane region" description="Helical; Name=5" evidence="1">
    <location>
        <begin position="169"/>
        <end position="189"/>
    </location>
</feature>
<feature type="transmembrane region" description="Helical; Name=6" evidence="1">
    <location>
        <begin position="202"/>
        <end position="222"/>
    </location>
</feature>
<feature type="short sequence motif" description="NPA 1">
    <location>
        <begin position="69"/>
        <end position="71"/>
    </location>
</feature>
<feature type="short sequence motif" description="NPA 2">
    <location>
        <begin position="180"/>
        <end position="182"/>
    </location>
</feature>
<dbReference type="EMBL" id="AL138655">
    <property type="protein sequence ID" value="CAB72165.1"/>
    <property type="molecule type" value="Genomic_DNA"/>
</dbReference>
<dbReference type="EMBL" id="CP002686">
    <property type="protein sequence ID" value="AEE79591.1"/>
    <property type="molecule type" value="Genomic_DNA"/>
</dbReference>
<dbReference type="EMBL" id="AF387020">
    <property type="protein sequence ID" value="AAK62465.1"/>
    <property type="molecule type" value="mRNA"/>
</dbReference>
<dbReference type="EMBL" id="BT006280">
    <property type="protein sequence ID" value="AAP13388.1"/>
    <property type="molecule type" value="mRNA"/>
</dbReference>
<dbReference type="EMBL" id="AY087153">
    <property type="protein sequence ID" value="AAM64711.1"/>
    <property type="molecule type" value="mRNA"/>
</dbReference>
<dbReference type="PIR" id="T47755">
    <property type="entry name" value="T47755"/>
</dbReference>
<dbReference type="RefSeq" id="NP_191254.1">
    <molecule id="Q9M1K3-1"/>
    <property type="nucleotide sequence ID" value="NM_115554.4"/>
</dbReference>
<dbReference type="SMR" id="Q9M1K3"/>
<dbReference type="BioGRID" id="10178">
    <property type="interactions" value="11"/>
</dbReference>
<dbReference type="FunCoup" id="Q9M1K3">
    <property type="interactions" value="415"/>
</dbReference>
<dbReference type="IntAct" id="Q9M1K3">
    <property type="interactions" value="11"/>
</dbReference>
<dbReference type="STRING" id="3702.Q9M1K3"/>
<dbReference type="PaxDb" id="3702-AT3G56950.2"/>
<dbReference type="EnsemblPlants" id="AT3G56950.1">
    <molecule id="Q9M1K3-1"/>
    <property type="protein sequence ID" value="AT3G56950.1"/>
    <property type="gene ID" value="AT3G56950"/>
</dbReference>
<dbReference type="Gramene" id="AT3G56950.1">
    <molecule id="Q9M1K3-1"/>
    <property type="protein sequence ID" value="AT3G56950.1"/>
    <property type="gene ID" value="AT3G56950"/>
</dbReference>
<dbReference type="KEGG" id="ath:AT3G56950"/>
<dbReference type="Araport" id="AT3G56950"/>
<dbReference type="TAIR" id="AT3G56950">
    <property type="gene designation" value="SIP2"/>
</dbReference>
<dbReference type="eggNOG" id="KOG0223">
    <property type="taxonomic scope" value="Eukaryota"/>
</dbReference>
<dbReference type="HOGENOM" id="CLU_100006_0_0_1"/>
<dbReference type="InParanoid" id="Q9M1K3"/>
<dbReference type="OMA" id="WITSVSK"/>
<dbReference type="OrthoDB" id="1580043at2759"/>
<dbReference type="PhylomeDB" id="Q9M1K3"/>
<dbReference type="PRO" id="PR:Q9M1K3"/>
<dbReference type="Proteomes" id="UP000006548">
    <property type="component" value="Chromosome 3"/>
</dbReference>
<dbReference type="ExpressionAtlas" id="Q9M1K3">
    <property type="expression patterns" value="baseline and differential"/>
</dbReference>
<dbReference type="GO" id="GO:0005789">
    <property type="term" value="C:endoplasmic reticulum membrane"/>
    <property type="evidence" value="ECO:0007669"/>
    <property type="project" value="UniProtKB-SubCell"/>
</dbReference>
<dbReference type="GO" id="GO:0015267">
    <property type="term" value="F:channel activity"/>
    <property type="evidence" value="ECO:0007669"/>
    <property type="project" value="InterPro"/>
</dbReference>
<dbReference type="FunFam" id="1.20.1080.10:FF:000058">
    <property type="entry name" value="Probable aquaporin SIP2-1"/>
    <property type="match status" value="1"/>
</dbReference>
<dbReference type="Gene3D" id="1.20.1080.10">
    <property type="entry name" value="Glycerol uptake facilitator protein"/>
    <property type="match status" value="1"/>
</dbReference>
<dbReference type="InterPro" id="IPR023271">
    <property type="entry name" value="Aquaporin-like"/>
</dbReference>
<dbReference type="InterPro" id="IPR000425">
    <property type="entry name" value="MIP"/>
</dbReference>
<dbReference type="InterPro" id="IPR044226">
    <property type="entry name" value="SIP2-1-like"/>
</dbReference>
<dbReference type="PANTHER" id="PTHR47720">
    <property type="entry name" value="AQUAPORIN SIP2-1-RELATED"/>
    <property type="match status" value="1"/>
</dbReference>
<dbReference type="PANTHER" id="PTHR47720:SF1">
    <property type="entry name" value="AQUAPORIN SIP2-1-RELATED"/>
    <property type="match status" value="1"/>
</dbReference>
<dbReference type="Pfam" id="PF00230">
    <property type="entry name" value="MIP"/>
    <property type="match status" value="1"/>
</dbReference>
<dbReference type="PRINTS" id="PR00783">
    <property type="entry name" value="MINTRINSICP"/>
</dbReference>
<dbReference type="SUPFAM" id="SSF81338">
    <property type="entry name" value="Aquaporin-like"/>
    <property type="match status" value="1"/>
</dbReference>
<proteinExistence type="evidence at transcript level"/>
<evidence type="ECO:0000255" key="1"/>
<evidence type="ECO:0000269" key="2">
    <source>
    </source>
</evidence>
<evidence type="ECO:0000269" key="3">
    <source>
    </source>
</evidence>
<evidence type="ECO:0000305" key="4"/>
<sequence length="237" mass="25945">MGRIGLVVTDLVLSFMWIWAGVLVNILVHGVLGFSRTDPSGEIVRYLFSIISMFIFAYLQQATKGGLYNPLTALAAGVSGGFSSFIFSVFVRIPVEVIGSILAVKHIIHVFPEIGKGPKLNVAIHHGALTEGILTFFIVLLSMGLTRKIPGSFFMKTWIGSLAKLTLHILGSDLTGGCMNPAAVMGWAYARGEHITKEHLLVYWLGPVKATLLAVWFFKVVFKPLTEEQEKPKAKSE</sequence>
<organism>
    <name type="scientific">Arabidopsis thaliana</name>
    <name type="common">Mouse-ear cress</name>
    <dbReference type="NCBI Taxonomy" id="3702"/>
    <lineage>
        <taxon>Eukaryota</taxon>
        <taxon>Viridiplantae</taxon>
        <taxon>Streptophyta</taxon>
        <taxon>Embryophyta</taxon>
        <taxon>Tracheophyta</taxon>
        <taxon>Spermatophyta</taxon>
        <taxon>Magnoliopsida</taxon>
        <taxon>eudicotyledons</taxon>
        <taxon>Gunneridae</taxon>
        <taxon>Pentapetalae</taxon>
        <taxon>rosids</taxon>
        <taxon>malvids</taxon>
        <taxon>Brassicales</taxon>
        <taxon>Brassicaceae</taxon>
        <taxon>Camelineae</taxon>
        <taxon>Arabidopsis</taxon>
    </lineage>
</organism>
<gene>
    <name type="primary">SIP2-1</name>
    <name type="ordered locus">At3g56950</name>
    <name type="ORF">F24I3.30</name>
</gene>